<sequence length="104" mass="11189">MAAKIRKGDKVIVLSGRDKGRTGEVFEVRPAEGRALVRGVNIVKRHQKQTQNQEGGILSKESPIDLSNIAIVGKDGKPTRVGFKIQADGTKVRVAKRSGAEIDG</sequence>
<organism>
    <name type="scientific">Nitrobacter winogradskyi (strain ATCC 25391 / DSM 10237 / CIP 104748 / NCIMB 11846 / Nb-255)</name>
    <dbReference type="NCBI Taxonomy" id="323098"/>
    <lineage>
        <taxon>Bacteria</taxon>
        <taxon>Pseudomonadati</taxon>
        <taxon>Pseudomonadota</taxon>
        <taxon>Alphaproteobacteria</taxon>
        <taxon>Hyphomicrobiales</taxon>
        <taxon>Nitrobacteraceae</taxon>
        <taxon>Nitrobacter</taxon>
    </lineage>
</organism>
<accession>Q3SSV5</accession>
<gene>
    <name evidence="1" type="primary">rplX</name>
    <name type="ordered locus">Nwi_1375</name>
</gene>
<dbReference type="EMBL" id="CP000115">
    <property type="protein sequence ID" value="ABA04636.1"/>
    <property type="molecule type" value="Genomic_DNA"/>
</dbReference>
<dbReference type="RefSeq" id="WP_011314649.1">
    <property type="nucleotide sequence ID" value="NC_007406.1"/>
</dbReference>
<dbReference type="SMR" id="Q3SSV5"/>
<dbReference type="STRING" id="323098.Nwi_1375"/>
<dbReference type="KEGG" id="nwi:Nwi_1375"/>
<dbReference type="eggNOG" id="COG0198">
    <property type="taxonomic scope" value="Bacteria"/>
</dbReference>
<dbReference type="HOGENOM" id="CLU_093315_2_2_5"/>
<dbReference type="OrthoDB" id="9807419at2"/>
<dbReference type="Proteomes" id="UP000002531">
    <property type="component" value="Chromosome"/>
</dbReference>
<dbReference type="GO" id="GO:1990904">
    <property type="term" value="C:ribonucleoprotein complex"/>
    <property type="evidence" value="ECO:0007669"/>
    <property type="project" value="UniProtKB-KW"/>
</dbReference>
<dbReference type="GO" id="GO:0005840">
    <property type="term" value="C:ribosome"/>
    <property type="evidence" value="ECO:0007669"/>
    <property type="project" value="UniProtKB-KW"/>
</dbReference>
<dbReference type="GO" id="GO:0019843">
    <property type="term" value="F:rRNA binding"/>
    <property type="evidence" value="ECO:0007669"/>
    <property type="project" value="UniProtKB-UniRule"/>
</dbReference>
<dbReference type="GO" id="GO:0003735">
    <property type="term" value="F:structural constituent of ribosome"/>
    <property type="evidence" value="ECO:0007669"/>
    <property type="project" value="InterPro"/>
</dbReference>
<dbReference type="GO" id="GO:0006412">
    <property type="term" value="P:translation"/>
    <property type="evidence" value="ECO:0007669"/>
    <property type="project" value="UniProtKB-UniRule"/>
</dbReference>
<dbReference type="CDD" id="cd06089">
    <property type="entry name" value="KOW_RPL26"/>
    <property type="match status" value="1"/>
</dbReference>
<dbReference type="Gene3D" id="2.30.30.30">
    <property type="match status" value="1"/>
</dbReference>
<dbReference type="HAMAP" id="MF_01326_B">
    <property type="entry name" value="Ribosomal_uL24_B"/>
    <property type="match status" value="1"/>
</dbReference>
<dbReference type="InterPro" id="IPR005824">
    <property type="entry name" value="KOW"/>
</dbReference>
<dbReference type="InterPro" id="IPR014722">
    <property type="entry name" value="Rib_uL2_dom2"/>
</dbReference>
<dbReference type="InterPro" id="IPR003256">
    <property type="entry name" value="Ribosomal_uL24"/>
</dbReference>
<dbReference type="InterPro" id="IPR005825">
    <property type="entry name" value="Ribosomal_uL24_CS"/>
</dbReference>
<dbReference type="InterPro" id="IPR041988">
    <property type="entry name" value="Ribosomal_uL24_KOW"/>
</dbReference>
<dbReference type="InterPro" id="IPR008991">
    <property type="entry name" value="Translation_prot_SH3-like_sf"/>
</dbReference>
<dbReference type="NCBIfam" id="TIGR01079">
    <property type="entry name" value="rplX_bact"/>
    <property type="match status" value="1"/>
</dbReference>
<dbReference type="PANTHER" id="PTHR12903">
    <property type="entry name" value="MITOCHONDRIAL RIBOSOMAL PROTEIN L24"/>
    <property type="match status" value="1"/>
</dbReference>
<dbReference type="Pfam" id="PF00467">
    <property type="entry name" value="KOW"/>
    <property type="match status" value="1"/>
</dbReference>
<dbReference type="Pfam" id="PF17136">
    <property type="entry name" value="ribosomal_L24"/>
    <property type="match status" value="1"/>
</dbReference>
<dbReference type="SMART" id="SM00739">
    <property type="entry name" value="KOW"/>
    <property type="match status" value="1"/>
</dbReference>
<dbReference type="SUPFAM" id="SSF50104">
    <property type="entry name" value="Translation proteins SH3-like domain"/>
    <property type="match status" value="1"/>
</dbReference>
<dbReference type="PROSITE" id="PS01108">
    <property type="entry name" value="RIBOSOMAL_L24"/>
    <property type="match status" value="1"/>
</dbReference>
<keyword id="KW-1185">Reference proteome</keyword>
<keyword id="KW-0687">Ribonucleoprotein</keyword>
<keyword id="KW-0689">Ribosomal protein</keyword>
<keyword id="KW-0694">RNA-binding</keyword>
<keyword id="KW-0699">rRNA-binding</keyword>
<proteinExistence type="inferred from homology"/>
<name>RL24_NITWN</name>
<comment type="function">
    <text evidence="1">One of two assembly initiator proteins, it binds directly to the 5'-end of the 23S rRNA, where it nucleates assembly of the 50S subunit.</text>
</comment>
<comment type="function">
    <text evidence="1">One of the proteins that surrounds the polypeptide exit tunnel on the outside of the subunit.</text>
</comment>
<comment type="subunit">
    <text evidence="1">Part of the 50S ribosomal subunit.</text>
</comment>
<comment type="similarity">
    <text evidence="1">Belongs to the universal ribosomal protein uL24 family.</text>
</comment>
<protein>
    <recommendedName>
        <fullName evidence="1">Large ribosomal subunit protein uL24</fullName>
    </recommendedName>
    <alternativeName>
        <fullName evidence="2">50S ribosomal protein L24</fullName>
    </alternativeName>
</protein>
<reference key="1">
    <citation type="journal article" date="2006" name="Appl. Environ. Microbiol.">
        <title>Genome sequence of the chemolithoautotrophic nitrite-oxidizing bacterium Nitrobacter winogradskyi Nb-255.</title>
        <authorList>
            <person name="Starkenburg S.R."/>
            <person name="Chain P.S.G."/>
            <person name="Sayavedra-Soto L.A."/>
            <person name="Hauser L."/>
            <person name="Land M.L."/>
            <person name="Larimer F.W."/>
            <person name="Malfatti S.A."/>
            <person name="Klotz M.G."/>
            <person name="Bottomley P.J."/>
            <person name="Arp D.J."/>
            <person name="Hickey W.J."/>
        </authorList>
    </citation>
    <scope>NUCLEOTIDE SEQUENCE [LARGE SCALE GENOMIC DNA]</scope>
    <source>
        <strain>ATCC 25391 / DSM 10237 / CIP 104748 / NCIMB 11846 / Nb-255</strain>
    </source>
</reference>
<evidence type="ECO:0000255" key="1">
    <source>
        <dbReference type="HAMAP-Rule" id="MF_01326"/>
    </source>
</evidence>
<evidence type="ECO:0000305" key="2"/>
<feature type="chain" id="PRO_0000241627" description="Large ribosomal subunit protein uL24">
    <location>
        <begin position="1"/>
        <end position="104"/>
    </location>
</feature>